<sequence>MNADGPVVNVHVLFFAKSRELANTPRSKVDLPTEITASDLLELLVSKFGLTPIRDNLILAHNESYIDNLSERILFKEGDELAIIPPLSGG</sequence>
<proteinExistence type="inferred from homology"/>
<organism>
    <name type="scientific">Drosophila yakuba</name>
    <name type="common">Fruit fly</name>
    <dbReference type="NCBI Taxonomy" id="7245"/>
    <lineage>
        <taxon>Eukaryota</taxon>
        <taxon>Metazoa</taxon>
        <taxon>Ecdysozoa</taxon>
        <taxon>Arthropoda</taxon>
        <taxon>Hexapoda</taxon>
        <taxon>Insecta</taxon>
        <taxon>Pterygota</taxon>
        <taxon>Neoptera</taxon>
        <taxon>Endopterygota</taxon>
        <taxon>Diptera</taxon>
        <taxon>Brachycera</taxon>
        <taxon>Muscomorpha</taxon>
        <taxon>Ephydroidea</taxon>
        <taxon>Drosophilidae</taxon>
        <taxon>Drosophila</taxon>
        <taxon>Sophophora</taxon>
    </lineage>
</organism>
<feature type="chain" id="PRO_0000369315" description="Molybdopterin synthase sulfur carrier subunit">
    <location>
        <begin position="1"/>
        <end position="90"/>
    </location>
</feature>
<feature type="modified residue" description="1-thioglycine; alternate" evidence="2">
    <location>
        <position position="90"/>
    </location>
</feature>
<feature type="modified residue" description="Glycyl adenylate; alternate" evidence="2">
    <location>
        <position position="90"/>
    </location>
</feature>
<evidence type="ECO:0000250" key="1">
    <source>
        <dbReference type="UniProtKB" id="P0C919"/>
    </source>
</evidence>
<evidence type="ECO:0000255" key="2">
    <source>
        <dbReference type="HAMAP-Rule" id="MF_03051"/>
    </source>
</evidence>
<comment type="function">
    <text evidence="2">Acts as a sulfur carrier required for molybdopterin biosynthesis. Component of the molybdopterin synthase complex that catalyzes the conversion of precursor Z into molybdopterin by mediating the incorporation of 2 sulfur atoms into precursor Z to generate a dithiolene group. In the complex, serves as sulfur donor by being thiocarboxylated (-COSH) at its C-terminus by MOCS3. After interaction with Mocs2B, the sulfur is then transferred to precursor Z to form molybdopterin.</text>
</comment>
<comment type="pathway">
    <text evidence="2">Cofactor biosynthesis; molybdopterin biosynthesis.</text>
</comment>
<comment type="subunit">
    <text evidence="2">Heterotetramer; composed of 2 small (Mocs2A) and 2 large (Mocs2B) subunits.</text>
</comment>
<comment type="subcellular location">
    <subcellularLocation>
        <location evidence="2">Cytoplasm</location>
    </subcellularLocation>
</comment>
<comment type="PTM">
    <text evidence="2">C-terminal thiocarboxylation occurs in 2 steps, it is first acyl-adenylated (-COAMP) via the hesA/moeB/thiF part of MOCS3, then thiocarboxylated (-COSH) via the rhodanese domain of MOCS3.</text>
</comment>
<comment type="miscellaneous">
    <text>This protein is produced by a bicistronic gene which also produces the large subunit (Mocs2B).</text>
</comment>
<comment type="similarity">
    <text evidence="2">Belongs to the MoaD family. MOCS2A subfamily.</text>
</comment>
<dbReference type="EMBL" id="CM000160">
    <property type="protein sequence ID" value="EDW98817.1"/>
    <property type="molecule type" value="Genomic_DNA"/>
</dbReference>
<dbReference type="SMR" id="B4PUD0"/>
<dbReference type="EnsemblMetazoa" id="FBtr0257254">
    <property type="protein sequence ID" value="FBpp0255746"/>
    <property type="gene ID" value="FBgn0228579"/>
</dbReference>
<dbReference type="EnsemblMetazoa" id="XM_002099069.3">
    <property type="protein sequence ID" value="XP_002099105.1"/>
    <property type="gene ID" value="LOC6538583"/>
</dbReference>
<dbReference type="GeneID" id="6538583"/>
<dbReference type="KEGG" id="dya:Dyak_GE10736"/>
<dbReference type="CTD" id="8674021"/>
<dbReference type="eggNOG" id="KOG3474">
    <property type="taxonomic scope" value="Eukaryota"/>
</dbReference>
<dbReference type="HOGENOM" id="CLU_114601_4_3_1"/>
<dbReference type="OMA" id="HVLFFAK"/>
<dbReference type="OrthoDB" id="5531344at2759"/>
<dbReference type="PhylomeDB" id="B4PUD0"/>
<dbReference type="UniPathway" id="UPA00344"/>
<dbReference type="Proteomes" id="UP000002282">
    <property type="component" value="Chromosome 3R"/>
</dbReference>
<dbReference type="GO" id="GO:0005829">
    <property type="term" value="C:cytosol"/>
    <property type="evidence" value="ECO:0000250"/>
    <property type="project" value="UniProtKB"/>
</dbReference>
<dbReference type="GO" id="GO:1990133">
    <property type="term" value="C:molybdopterin adenylyltransferase complex"/>
    <property type="evidence" value="ECO:0007669"/>
    <property type="project" value="TreeGrafter"/>
</dbReference>
<dbReference type="GO" id="GO:1990140">
    <property type="term" value="C:molybdopterin synthase complex"/>
    <property type="evidence" value="ECO:0000250"/>
    <property type="project" value="UniProtKB"/>
</dbReference>
<dbReference type="GO" id="GO:0030366">
    <property type="term" value="F:molybdopterin synthase activity"/>
    <property type="evidence" value="ECO:0007669"/>
    <property type="project" value="UniProtKB-UniRule"/>
</dbReference>
<dbReference type="GO" id="GO:0000166">
    <property type="term" value="F:nucleotide binding"/>
    <property type="evidence" value="ECO:0007669"/>
    <property type="project" value="UniProtKB-KW"/>
</dbReference>
<dbReference type="GO" id="GO:0006777">
    <property type="term" value="P:Mo-molybdopterin cofactor biosynthetic process"/>
    <property type="evidence" value="ECO:0000250"/>
    <property type="project" value="UniProtKB"/>
</dbReference>
<dbReference type="CDD" id="cd00754">
    <property type="entry name" value="Ubl_MoaD"/>
    <property type="match status" value="1"/>
</dbReference>
<dbReference type="FunFam" id="3.10.20.30:FF:000010">
    <property type="entry name" value="Molybdopterin synthase sulfur carrier subunit"/>
    <property type="match status" value="1"/>
</dbReference>
<dbReference type="Gene3D" id="3.10.20.30">
    <property type="match status" value="1"/>
</dbReference>
<dbReference type="HAMAP" id="MF_03051">
    <property type="entry name" value="MOCS2A"/>
    <property type="match status" value="1"/>
</dbReference>
<dbReference type="InterPro" id="IPR012675">
    <property type="entry name" value="Beta-grasp_dom_sf"/>
</dbReference>
<dbReference type="InterPro" id="IPR044672">
    <property type="entry name" value="MOCS2A"/>
</dbReference>
<dbReference type="InterPro" id="IPR028887">
    <property type="entry name" value="MOCS2A_euk"/>
</dbReference>
<dbReference type="InterPro" id="IPR016155">
    <property type="entry name" value="Mopterin_synth/thiamin_S_b"/>
</dbReference>
<dbReference type="InterPro" id="IPR003749">
    <property type="entry name" value="ThiS/MoaD-like"/>
</dbReference>
<dbReference type="NCBIfam" id="TIGR01682">
    <property type="entry name" value="moaD"/>
    <property type="match status" value="1"/>
</dbReference>
<dbReference type="PANTHER" id="PTHR33359">
    <property type="entry name" value="MOLYBDOPTERIN SYNTHASE SULFUR CARRIER SUBUNIT"/>
    <property type="match status" value="1"/>
</dbReference>
<dbReference type="PANTHER" id="PTHR33359:SF1">
    <property type="entry name" value="MOLYBDOPTERIN SYNTHASE SULFUR CARRIER SUBUNIT"/>
    <property type="match status" value="1"/>
</dbReference>
<dbReference type="Pfam" id="PF02597">
    <property type="entry name" value="ThiS"/>
    <property type="match status" value="1"/>
</dbReference>
<dbReference type="SUPFAM" id="SSF54285">
    <property type="entry name" value="MoaD/ThiS"/>
    <property type="match status" value="1"/>
</dbReference>
<keyword id="KW-0963">Cytoplasm</keyword>
<keyword id="KW-0501">Molybdenum cofactor biosynthesis</keyword>
<keyword id="KW-0547">Nucleotide-binding</keyword>
<keyword id="KW-0597">Phosphoprotein</keyword>
<accession>B4PUD0</accession>
<name>MOC2A_DROYA</name>
<gene>
    <name evidence="1" type="primary">Mocs2A</name>
    <name evidence="2" type="synonym">Mocs2</name>
    <name type="ORF">GE10736</name>
</gene>
<protein>
    <recommendedName>
        <fullName evidence="2">Molybdopterin synthase sulfur carrier subunit</fullName>
    </recommendedName>
    <alternativeName>
        <fullName evidence="2">Molybdenum cofactor synthesis protein 2 small subunit</fullName>
    </alternativeName>
    <alternativeName>
        <fullName evidence="2">Molybdenum cofactor synthesis protein 2A</fullName>
        <shortName evidence="2">MOCS2A</shortName>
    </alternativeName>
    <alternativeName>
        <fullName evidence="2">Sulfur carrier protein MOCS2A</fullName>
    </alternativeName>
</protein>
<reference key="1">
    <citation type="journal article" date="2007" name="Nature">
        <title>Evolution of genes and genomes on the Drosophila phylogeny.</title>
        <authorList>
            <consortium name="Drosophila 12 genomes consortium"/>
        </authorList>
    </citation>
    <scope>NUCLEOTIDE SEQUENCE [LARGE SCALE GENOMIC DNA]</scope>
    <source>
        <strain>Tai18E2 / Tucson 14021-0261.01</strain>
    </source>
</reference>